<feature type="chain" id="PRO_1000069131" description="Proline--tRNA ligase">
    <location>
        <begin position="1"/>
        <end position="569"/>
    </location>
</feature>
<dbReference type="EC" id="6.1.1.15" evidence="1"/>
<dbReference type="EMBL" id="CP000768">
    <property type="protein sequence ID" value="ABS44339.1"/>
    <property type="molecule type" value="Genomic_DNA"/>
</dbReference>
<dbReference type="SMR" id="A7H4J9"/>
<dbReference type="KEGG" id="cjd:JJD26997_1387"/>
<dbReference type="HOGENOM" id="CLU_016739_0_0_7"/>
<dbReference type="Proteomes" id="UP000002302">
    <property type="component" value="Chromosome"/>
</dbReference>
<dbReference type="GO" id="GO:0005829">
    <property type="term" value="C:cytosol"/>
    <property type="evidence" value="ECO:0007669"/>
    <property type="project" value="TreeGrafter"/>
</dbReference>
<dbReference type="GO" id="GO:0002161">
    <property type="term" value="F:aminoacyl-tRNA deacylase activity"/>
    <property type="evidence" value="ECO:0007669"/>
    <property type="project" value="InterPro"/>
</dbReference>
<dbReference type="GO" id="GO:0005524">
    <property type="term" value="F:ATP binding"/>
    <property type="evidence" value="ECO:0007669"/>
    <property type="project" value="UniProtKB-UniRule"/>
</dbReference>
<dbReference type="GO" id="GO:0004827">
    <property type="term" value="F:proline-tRNA ligase activity"/>
    <property type="evidence" value="ECO:0007669"/>
    <property type="project" value="UniProtKB-UniRule"/>
</dbReference>
<dbReference type="GO" id="GO:0006433">
    <property type="term" value="P:prolyl-tRNA aminoacylation"/>
    <property type="evidence" value="ECO:0007669"/>
    <property type="project" value="UniProtKB-UniRule"/>
</dbReference>
<dbReference type="CDD" id="cd04334">
    <property type="entry name" value="ProRS-INS"/>
    <property type="match status" value="1"/>
</dbReference>
<dbReference type="CDD" id="cd00861">
    <property type="entry name" value="ProRS_anticodon_short"/>
    <property type="match status" value="1"/>
</dbReference>
<dbReference type="CDD" id="cd00779">
    <property type="entry name" value="ProRS_core_prok"/>
    <property type="match status" value="1"/>
</dbReference>
<dbReference type="FunFam" id="3.30.930.10:FF:000065">
    <property type="entry name" value="Proline--tRNA ligase"/>
    <property type="match status" value="1"/>
</dbReference>
<dbReference type="FunFam" id="3.30.930.10:FF:000066">
    <property type="entry name" value="Proline--tRNA ligase"/>
    <property type="match status" value="1"/>
</dbReference>
<dbReference type="Gene3D" id="3.40.50.800">
    <property type="entry name" value="Anticodon-binding domain"/>
    <property type="match status" value="1"/>
</dbReference>
<dbReference type="Gene3D" id="3.30.930.10">
    <property type="entry name" value="Bira Bifunctional Protein, Domain 2"/>
    <property type="match status" value="2"/>
</dbReference>
<dbReference type="HAMAP" id="MF_01569">
    <property type="entry name" value="Pro_tRNA_synth_type1"/>
    <property type="match status" value="1"/>
</dbReference>
<dbReference type="InterPro" id="IPR002314">
    <property type="entry name" value="aa-tRNA-synt_IIb"/>
</dbReference>
<dbReference type="InterPro" id="IPR006195">
    <property type="entry name" value="aa-tRNA-synth_II"/>
</dbReference>
<dbReference type="InterPro" id="IPR045864">
    <property type="entry name" value="aa-tRNA-synth_II/BPL/LPL"/>
</dbReference>
<dbReference type="InterPro" id="IPR004154">
    <property type="entry name" value="Anticodon-bd"/>
</dbReference>
<dbReference type="InterPro" id="IPR036621">
    <property type="entry name" value="Anticodon-bd_dom_sf"/>
</dbReference>
<dbReference type="InterPro" id="IPR002316">
    <property type="entry name" value="Pro-tRNA-ligase_IIa"/>
</dbReference>
<dbReference type="InterPro" id="IPR004500">
    <property type="entry name" value="Pro-tRNA-synth_IIa_bac-type"/>
</dbReference>
<dbReference type="InterPro" id="IPR023717">
    <property type="entry name" value="Pro-tRNA-Synthase_IIa_type1"/>
</dbReference>
<dbReference type="InterPro" id="IPR050062">
    <property type="entry name" value="Pro-tRNA_synthetase"/>
</dbReference>
<dbReference type="InterPro" id="IPR044140">
    <property type="entry name" value="ProRS_anticodon_short"/>
</dbReference>
<dbReference type="InterPro" id="IPR033730">
    <property type="entry name" value="ProRS_core_prok"/>
</dbReference>
<dbReference type="InterPro" id="IPR036754">
    <property type="entry name" value="YbaK/aa-tRNA-synt-asso_dom_sf"/>
</dbReference>
<dbReference type="InterPro" id="IPR007214">
    <property type="entry name" value="YbaK/aa-tRNA-synth-assoc-dom"/>
</dbReference>
<dbReference type="NCBIfam" id="NF006625">
    <property type="entry name" value="PRK09194.1"/>
    <property type="match status" value="1"/>
</dbReference>
<dbReference type="NCBIfam" id="TIGR00409">
    <property type="entry name" value="proS_fam_II"/>
    <property type="match status" value="1"/>
</dbReference>
<dbReference type="PANTHER" id="PTHR42753">
    <property type="entry name" value="MITOCHONDRIAL RIBOSOME PROTEIN L39/PROLYL-TRNA LIGASE FAMILY MEMBER"/>
    <property type="match status" value="1"/>
</dbReference>
<dbReference type="PANTHER" id="PTHR42753:SF2">
    <property type="entry name" value="PROLINE--TRNA LIGASE"/>
    <property type="match status" value="1"/>
</dbReference>
<dbReference type="Pfam" id="PF03129">
    <property type="entry name" value="HGTP_anticodon"/>
    <property type="match status" value="1"/>
</dbReference>
<dbReference type="Pfam" id="PF00587">
    <property type="entry name" value="tRNA-synt_2b"/>
    <property type="match status" value="1"/>
</dbReference>
<dbReference type="Pfam" id="PF04073">
    <property type="entry name" value="tRNA_edit"/>
    <property type="match status" value="1"/>
</dbReference>
<dbReference type="PRINTS" id="PR01046">
    <property type="entry name" value="TRNASYNTHPRO"/>
</dbReference>
<dbReference type="SUPFAM" id="SSF52954">
    <property type="entry name" value="Class II aaRS ABD-related"/>
    <property type="match status" value="1"/>
</dbReference>
<dbReference type="SUPFAM" id="SSF55681">
    <property type="entry name" value="Class II aaRS and biotin synthetases"/>
    <property type="match status" value="1"/>
</dbReference>
<dbReference type="SUPFAM" id="SSF55826">
    <property type="entry name" value="YbaK/ProRS associated domain"/>
    <property type="match status" value="1"/>
</dbReference>
<dbReference type="PROSITE" id="PS50862">
    <property type="entry name" value="AA_TRNA_LIGASE_II"/>
    <property type="match status" value="1"/>
</dbReference>
<sequence>MMRFTKFYAPSLKEAPKDASLPSHIFLTRAGFVEQIGSGLYNFLPLGKRVLDKIKNIVKEEMDKAGAQEVNLSFITPASLWQESGRYNVFGKELLRFKDRKENEFVLGPTHEEAMLSLVKNKITSYKQLPLHLYQIGLKFRDEARPRFGLLRCREFLMKDGYSFHANEEDLGREFELMYKTYSQILQRMGLDFRAVEADSGAIGGSGSKEFMVLAKNGEDDILICENCDYAANIEAAKRAKKTCQDERPEANYASKFHTPNIKTIDSLAQFFKTNAFYTIKAVVKKAIYENESKLVVFFIRGSDDLQEVKAQNACSALELVDASEEELEKAGLVAGFIGFVGLKDIDFYIDFELENEKQMIMGANEKDYHLIGIDVVNLNKDRFKDLIEVKEGDCCVKCGAKLKQSKGIEVGHIFKLGQKYSKAMNANFLDENGKSQPFYMGCYGIGVSRLLAVAIEASHDEKGCIWNKTLAPFVLEIIVSNIKDEKTLEFANKLYEDLTELGLEVLLDDRNERFGVKMNDFELMGFPYALVIGKGLENNEIEFIQREGLVKELIKTDELTEILKKKVL</sequence>
<reference key="1">
    <citation type="submission" date="2007-07" db="EMBL/GenBank/DDBJ databases">
        <title>Complete genome sequence of Campylobacter jejuni subsp doylei 269.97 isolated from human blood.</title>
        <authorList>
            <person name="Fouts D.E."/>
            <person name="Mongodin E.F."/>
            <person name="Puiu D."/>
            <person name="Sebastian Y."/>
            <person name="Miller W.G."/>
            <person name="Mandrell R.E."/>
            <person name="Lastovica A.J."/>
            <person name="Nelson K.E."/>
        </authorList>
    </citation>
    <scope>NUCLEOTIDE SEQUENCE [LARGE SCALE GENOMIC DNA]</scope>
    <source>
        <strain>ATCC BAA-1458 / RM4099 / 269.97</strain>
    </source>
</reference>
<organism>
    <name type="scientific">Campylobacter jejuni subsp. doylei (strain ATCC BAA-1458 / RM4099 / 269.97)</name>
    <dbReference type="NCBI Taxonomy" id="360109"/>
    <lineage>
        <taxon>Bacteria</taxon>
        <taxon>Pseudomonadati</taxon>
        <taxon>Campylobacterota</taxon>
        <taxon>Epsilonproteobacteria</taxon>
        <taxon>Campylobacterales</taxon>
        <taxon>Campylobacteraceae</taxon>
        <taxon>Campylobacter</taxon>
    </lineage>
</organism>
<protein>
    <recommendedName>
        <fullName evidence="1">Proline--tRNA ligase</fullName>
        <ecNumber evidence="1">6.1.1.15</ecNumber>
    </recommendedName>
    <alternativeName>
        <fullName evidence="1">Prolyl-tRNA synthetase</fullName>
        <shortName evidence="1">ProRS</shortName>
    </alternativeName>
</protein>
<comment type="function">
    <text evidence="1">Catalyzes the attachment of proline to tRNA(Pro) in a two-step reaction: proline is first activated by ATP to form Pro-AMP and then transferred to the acceptor end of tRNA(Pro). As ProRS can inadvertently accommodate and process non-cognate amino acids such as alanine and cysteine, to avoid such errors it has two additional distinct editing activities against alanine. One activity is designated as 'pretransfer' editing and involves the tRNA(Pro)-independent hydrolysis of activated Ala-AMP. The other activity is designated 'posttransfer' editing and involves deacylation of mischarged Ala-tRNA(Pro). The misacylated Cys-tRNA(Pro) is not edited by ProRS.</text>
</comment>
<comment type="catalytic activity">
    <reaction evidence="1">
        <text>tRNA(Pro) + L-proline + ATP = L-prolyl-tRNA(Pro) + AMP + diphosphate</text>
        <dbReference type="Rhea" id="RHEA:14305"/>
        <dbReference type="Rhea" id="RHEA-COMP:9700"/>
        <dbReference type="Rhea" id="RHEA-COMP:9702"/>
        <dbReference type="ChEBI" id="CHEBI:30616"/>
        <dbReference type="ChEBI" id="CHEBI:33019"/>
        <dbReference type="ChEBI" id="CHEBI:60039"/>
        <dbReference type="ChEBI" id="CHEBI:78442"/>
        <dbReference type="ChEBI" id="CHEBI:78532"/>
        <dbReference type="ChEBI" id="CHEBI:456215"/>
        <dbReference type="EC" id="6.1.1.15"/>
    </reaction>
</comment>
<comment type="subunit">
    <text evidence="1">Homodimer.</text>
</comment>
<comment type="subcellular location">
    <subcellularLocation>
        <location evidence="1">Cytoplasm</location>
    </subcellularLocation>
</comment>
<comment type="domain">
    <text evidence="1">Consists of three domains: the N-terminal catalytic domain, the editing domain and the C-terminal anticodon-binding domain.</text>
</comment>
<comment type="similarity">
    <text evidence="1">Belongs to the class-II aminoacyl-tRNA synthetase family. ProS type 1 subfamily.</text>
</comment>
<keyword id="KW-0030">Aminoacyl-tRNA synthetase</keyword>
<keyword id="KW-0067">ATP-binding</keyword>
<keyword id="KW-0963">Cytoplasm</keyword>
<keyword id="KW-0436">Ligase</keyword>
<keyword id="KW-0547">Nucleotide-binding</keyword>
<keyword id="KW-0648">Protein biosynthesis</keyword>
<name>SYP_CAMJD</name>
<gene>
    <name evidence="1" type="primary">proS</name>
    <name type="ordered locus">JJD26997_1387</name>
</gene>
<evidence type="ECO:0000255" key="1">
    <source>
        <dbReference type="HAMAP-Rule" id="MF_01569"/>
    </source>
</evidence>
<proteinExistence type="inferred from homology"/>
<accession>A7H4J9</accession>